<sequence length="116" mass="13076">MMEIMLKAKIHMATVTEKEIEYEGSIGIDEELLELSGIKINEMVLISDVNNGNRFITYVIPEPRGSRKISLNGAAARLVEKGDKIIIMAFGLYSKDEYKSPKILIMNSDNTVKEIR</sequence>
<dbReference type="EC" id="4.1.1.11" evidence="1"/>
<dbReference type="EMBL" id="CP000771">
    <property type="protein sequence ID" value="ABS60732.1"/>
    <property type="molecule type" value="Genomic_DNA"/>
</dbReference>
<dbReference type="RefSeq" id="WP_011994048.1">
    <property type="nucleotide sequence ID" value="NC_009718.1"/>
</dbReference>
<dbReference type="SMR" id="A7HLE9"/>
<dbReference type="STRING" id="381764.Fnod_0880"/>
<dbReference type="KEGG" id="fno:Fnod_0880"/>
<dbReference type="eggNOG" id="COG0853">
    <property type="taxonomic scope" value="Bacteria"/>
</dbReference>
<dbReference type="HOGENOM" id="CLU_115305_2_0_0"/>
<dbReference type="OrthoDB" id="9803983at2"/>
<dbReference type="UniPathway" id="UPA00028">
    <property type="reaction ID" value="UER00002"/>
</dbReference>
<dbReference type="Proteomes" id="UP000002415">
    <property type="component" value="Chromosome"/>
</dbReference>
<dbReference type="GO" id="GO:0005829">
    <property type="term" value="C:cytosol"/>
    <property type="evidence" value="ECO:0007669"/>
    <property type="project" value="TreeGrafter"/>
</dbReference>
<dbReference type="GO" id="GO:0004068">
    <property type="term" value="F:aspartate 1-decarboxylase activity"/>
    <property type="evidence" value="ECO:0007669"/>
    <property type="project" value="UniProtKB-UniRule"/>
</dbReference>
<dbReference type="GO" id="GO:0006523">
    <property type="term" value="P:alanine biosynthetic process"/>
    <property type="evidence" value="ECO:0007669"/>
    <property type="project" value="InterPro"/>
</dbReference>
<dbReference type="GO" id="GO:0015940">
    <property type="term" value="P:pantothenate biosynthetic process"/>
    <property type="evidence" value="ECO:0007669"/>
    <property type="project" value="UniProtKB-UniRule"/>
</dbReference>
<dbReference type="CDD" id="cd06919">
    <property type="entry name" value="Asp_decarbox"/>
    <property type="match status" value="1"/>
</dbReference>
<dbReference type="Gene3D" id="2.40.40.20">
    <property type="match status" value="1"/>
</dbReference>
<dbReference type="HAMAP" id="MF_00446">
    <property type="entry name" value="PanD"/>
    <property type="match status" value="1"/>
</dbReference>
<dbReference type="InterPro" id="IPR009010">
    <property type="entry name" value="Asp_de-COase-like_dom_sf"/>
</dbReference>
<dbReference type="InterPro" id="IPR003190">
    <property type="entry name" value="Asp_decarbox"/>
</dbReference>
<dbReference type="NCBIfam" id="TIGR00223">
    <property type="entry name" value="panD"/>
    <property type="match status" value="1"/>
</dbReference>
<dbReference type="PANTHER" id="PTHR21012">
    <property type="entry name" value="ASPARTATE 1-DECARBOXYLASE"/>
    <property type="match status" value="1"/>
</dbReference>
<dbReference type="PANTHER" id="PTHR21012:SF0">
    <property type="entry name" value="ASPARTATE 1-DECARBOXYLASE"/>
    <property type="match status" value="1"/>
</dbReference>
<dbReference type="Pfam" id="PF02261">
    <property type="entry name" value="Asp_decarbox"/>
    <property type="match status" value="1"/>
</dbReference>
<dbReference type="PIRSF" id="PIRSF006246">
    <property type="entry name" value="Asp_decarbox"/>
    <property type="match status" value="1"/>
</dbReference>
<dbReference type="SUPFAM" id="SSF50692">
    <property type="entry name" value="ADC-like"/>
    <property type="match status" value="1"/>
</dbReference>
<proteinExistence type="inferred from homology"/>
<gene>
    <name evidence="1" type="primary">panD</name>
    <name type="ordered locus">Fnod_0880</name>
</gene>
<feature type="chain" id="PRO_1000072351" description="Aspartate 1-decarboxylase beta chain" evidence="1">
    <location>
        <begin position="1"/>
        <end position="24"/>
    </location>
</feature>
<feature type="chain" id="PRO_1000072352" description="Aspartate 1-decarboxylase alpha chain" evidence="1">
    <location>
        <begin position="25"/>
        <end position="116"/>
    </location>
</feature>
<feature type="active site" description="Schiff-base intermediate with substrate; via pyruvic acid" evidence="1">
    <location>
        <position position="25"/>
    </location>
</feature>
<feature type="active site" description="Proton donor" evidence="1">
    <location>
        <position position="58"/>
    </location>
</feature>
<feature type="binding site" evidence="1">
    <location>
        <position position="57"/>
    </location>
    <ligand>
        <name>substrate</name>
    </ligand>
</feature>
<feature type="binding site" evidence="1">
    <location>
        <begin position="73"/>
        <end position="75"/>
    </location>
    <ligand>
        <name>substrate</name>
    </ligand>
</feature>
<feature type="modified residue" description="Pyruvic acid (Ser)" evidence="1">
    <location>
        <position position="25"/>
    </location>
</feature>
<reference key="1">
    <citation type="submission" date="2007-07" db="EMBL/GenBank/DDBJ databases">
        <title>Complete sequence of Fervidobacterium nodosum Rt17-B1.</title>
        <authorList>
            <consortium name="US DOE Joint Genome Institute"/>
            <person name="Copeland A."/>
            <person name="Lucas S."/>
            <person name="Lapidus A."/>
            <person name="Barry K."/>
            <person name="Glavina del Rio T."/>
            <person name="Dalin E."/>
            <person name="Tice H."/>
            <person name="Pitluck S."/>
            <person name="Saunders E."/>
            <person name="Brettin T."/>
            <person name="Bruce D."/>
            <person name="Detter J.C."/>
            <person name="Han C."/>
            <person name="Schmutz J."/>
            <person name="Larimer F."/>
            <person name="Land M."/>
            <person name="Hauser L."/>
            <person name="Kyrpides N."/>
            <person name="Mikhailova N."/>
            <person name="Nelson K."/>
            <person name="Gogarten J.P."/>
            <person name="Noll K."/>
            <person name="Richardson P."/>
        </authorList>
    </citation>
    <scope>NUCLEOTIDE SEQUENCE [LARGE SCALE GENOMIC DNA]</scope>
    <source>
        <strain>ATCC 35602 / DSM 5306 / Rt17-B1</strain>
    </source>
</reference>
<comment type="function">
    <text evidence="1">Catalyzes the pyruvoyl-dependent decarboxylation of aspartate to produce beta-alanine.</text>
</comment>
<comment type="catalytic activity">
    <reaction evidence="1">
        <text>L-aspartate + H(+) = beta-alanine + CO2</text>
        <dbReference type="Rhea" id="RHEA:19497"/>
        <dbReference type="ChEBI" id="CHEBI:15378"/>
        <dbReference type="ChEBI" id="CHEBI:16526"/>
        <dbReference type="ChEBI" id="CHEBI:29991"/>
        <dbReference type="ChEBI" id="CHEBI:57966"/>
        <dbReference type="EC" id="4.1.1.11"/>
    </reaction>
</comment>
<comment type="cofactor">
    <cofactor evidence="1">
        <name>pyruvate</name>
        <dbReference type="ChEBI" id="CHEBI:15361"/>
    </cofactor>
    <text evidence="1">Binds 1 pyruvoyl group covalently per subunit.</text>
</comment>
<comment type="pathway">
    <text evidence="1">Cofactor biosynthesis; (R)-pantothenate biosynthesis; beta-alanine from L-aspartate: step 1/1.</text>
</comment>
<comment type="subunit">
    <text evidence="1">Heterooctamer of four alpha and four beta subunits.</text>
</comment>
<comment type="subcellular location">
    <subcellularLocation>
        <location evidence="1">Cytoplasm</location>
    </subcellularLocation>
</comment>
<comment type="PTM">
    <text evidence="1">Is synthesized initially as an inactive proenzyme, which is activated by self-cleavage at a specific serine bond to produce a beta-subunit with a hydroxyl group at its C-terminus and an alpha-subunit with a pyruvoyl group at its N-terminus.</text>
</comment>
<comment type="similarity">
    <text evidence="1">Belongs to the PanD family.</text>
</comment>
<protein>
    <recommendedName>
        <fullName evidence="1">Aspartate 1-decarboxylase</fullName>
        <ecNumber evidence="1">4.1.1.11</ecNumber>
    </recommendedName>
    <alternativeName>
        <fullName evidence="1">Aspartate alpha-decarboxylase</fullName>
    </alternativeName>
    <component>
        <recommendedName>
            <fullName evidence="1">Aspartate 1-decarboxylase beta chain</fullName>
        </recommendedName>
    </component>
    <component>
        <recommendedName>
            <fullName evidence="1">Aspartate 1-decarboxylase alpha chain</fullName>
        </recommendedName>
    </component>
</protein>
<keyword id="KW-0068">Autocatalytic cleavage</keyword>
<keyword id="KW-0963">Cytoplasm</keyword>
<keyword id="KW-0210">Decarboxylase</keyword>
<keyword id="KW-0456">Lyase</keyword>
<keyword id="KW-0566">Pantothenate biosynthesis</keyword>
<keyword id="KW-0670">Pyruvate</keyword>
<keyword id="KW-1185">Reference proteome</keyword>
<keyword id="KW-0704">Schiff base</keyword>
<keyword id="KW-0865">Zymogen</keyword>
<organism>
    <name type="scientific">Fervidobacterium nodosum (strain ATCC 35602 / DSM 5306 / Rt17-B1)</name>
    <dbReference type="NCBI Taxonomy" id="381764"/>
    <lineage>
        <taxon>Bacteria</taxon>
        <taxon>Thermotogati</taxon>
        <taxon>Thermotogota</taxon>
        <taxon>Thermotogae</taxon>
        <taxon>Thermotogales</taxon>
        <taxon>Fervidobacteriaceae</taxon>
        <taxon>Fervidobacterium</taxon>
    </lineage>
</organism>
<name>PAND_FERNB</name>
<accession>A7HLE9</accession>
<evidence type="ECO:0000255" key="1">
    <source>
        <dbReference type="HAMAP-Rule" id="MF_00446"/>
    </source>
</evidence>